<accession>Q8TZV9</accession>
<dbReference type="EMBL" id="AE009950">
    <property type="protein sequence ID" value="AAL81992.1"/>
    <property type="molecule type" value="Genomic_DNA"/>
</dbReference>
<dbReference type="RefSeq" id="WP_011013007.1">
    <property type="nucleotide sequence ID" value="NZ_CP023154.1"/>
</dbReference>
<dbReference type="SMR" id="Q8TZV9"/>
<dbReference type="STRING" id="186497.PF1868"/>
<dbReference type="PaxDb" id="186497-PF1868"/>
<dbReference type="GeneID" id="41713688"/>
<dbReference type="KEGG" id="pfu:PF1868"/>
<dbReference type="PATRIC" id="fig|186497.12.peg.1938"/>
<dbReference type="eggNOG" id="arCOG01241">
    <property type="taxonomic scope" value="Archaea"/>
</dbReference>
<dbReference type="HOGENOM" id="CLU_027562_9_5_2"/>
<dbReference type="OrthoDB" id="142231at2157"/>
<dbReference type="PhylomeDB" id="Q8TZV9"/>
<dbReference type="Proteomes" id="UP000001013">
    <property type="component" value="Chromosome"/>
</dbReference>
<dbReference type="GO" id="GO:0005737">
    <property type="term" value="C:cytoplasm"/>
    <property type="evidence" value="ECO:0007669"/>
    <property type="project" value="UniProtKB-SubCell"/>
</dbReference>
<dbReference type="GO" id="GO:0003677">
    <property type="term" value="F:DNA binding"/>
    <property type="evidence" value="ECO:0007669"/>
    <property type="project" value="UniProtKB-KW"/>
</dbReference>
<dbReference type="GO" id="GO:0009037">
    <property type="term" value="F:tyrosine-based site-specific recombinase activity"/>
    <property type="evidence" value="ECO:0007669"/>
    <property type="project" value="UniProtKB-UniRule"/>
</dbReference>
<dbReference type="GO" id="GO:0006313">
    <property type="term" value="P:DNA transposition"/>
    <property type="evidence" value="ECO:0007669"/>
    <property type="project" value="UniProtKB-UniRule"/>
</dbReference>
<dbReference type="CDD" id="cd00798">
    <property type="entry name" value="INT_XerDC_C"/>
    <property type="match status" value="1"/>
</dbReference>
<dbReference type="Gene3D" id="1.10.150.130">
    <property type="match status" value="1"/>
</dbReference>
<dbReference type="Gene3D" id="1.10.443.10">
    <property type="entry name" value="Intergrase catalytic core"/>
    <property type="match status" value="1"/>
</dbReference>
<dbReference type="HAMAP" id="MF_02055">
    <property type="entry name" value="Recomb_XerA"/>
    <property type="match status" value="1"/>
</dbReference>
<dbReference type="InterPro" id="IPR044068">
    <property type="entry name" value="CB"/>
</dbReference>
<dbReference type="InterPro" id="IPR011010">
    <property type="entry name" value="DNA_brk_join_enz"/>
</dbReference>
<dbReference type="InterPro" id="IPR013762">
    <property type="entry name" value="Integrase-like_cat_sf"/>
</dbReference>
<dbReference type="InterPro" id="IPR002104">
    <property type="entry name" value="Integrase_catalytic"/>
</dbReference>
<dbReference type="InterPro" id="IPR010998">
    <property type="entry name" value="Integrase_recombinase_N"/>
</dbReference>
<dbReference type="InterPro" id="IPR004107">
    <property type="entry name" value="Integrase_SAM-like_N"/>
</dbReference>
<dbReference type="InterPro" id="IPR050090">
    <property type="entry name" value="Tyrosine_recombinase_XerCD"/>
</dbReference>
<dbReference type="InterPro" id="IPR033686">
    <property type="entry name" value="XerA"/>
</dbReference>
<dbReference type="NCBIfam" id="NF040815">
    <property type="entry name" value="recomb_XerA_Arch"/>
    <property type="match status" value="1"/>
</dbReference>
<dbReference type="PANTHER" id="PTHR30349:SF41">
    <property type="entry name" value="INTEGRASE_RECOMBINASE PROTEIN MJ0367-RELATED"/>
    <property type="match status" value="1"/>
</dbReference>
<dbReference type="PANTHER" id="PTHR30349">
    <property type="entry name" value="PHAGE INTEGRASE-RELATED"/>
    <property type="match status" value="1"/>
</dbReference>
<dbReference type="Pfam" id="PF02899">
    <property type="entry name" value="Phage_int_SAM_1"/>
    <property type="match status" value="1"/>
</dbReference>
<dbReference type="Pfam" id="PF00589">
    <property type="entry name" value="Phage_integrase"/>
    <property type="match status" value="1"/>
</dbReference>
<dbReference type="SUPFAM" id="SSF56349">
    <property type="entry name" value="DNA breaking-rejoining enzymes"/>
    <property type="match status" value="1"/>
</dbReference>
<dbReference type="PROSITE" id="PS51900">
    <property type="entry name" value="CB"/>
    <property type="match status" value="1"/>
</dbReference>
<dbReference type="PROSITE" id="PS51898">
    <property type="entry name" value="TYR_RECOMBINASE"/>
    <property type="match status" value="1"/>
</dbReference>
<comment type="function">
    <text evidence="1">Site-specific tyrosine recombinase, which acts by catalyzing the cutting and rejoining of the recombining DNA molecules.</text>
</comment>
<comment type="subcellular location">
    <subcellularLocation>
        <location evidence="1">Cytoplasm</location>
    </subcellularLocation>
</comment>
<comment type="similarity">
    <text evidence="1">Belongs to the 'phage' integrase family. XerA subfamily.</text>
</comment>
<name>XERA_PYRFU</name>
<proteinExistence type="inferred from homology"/>
<sequence length="286" mass="33130">MREKTLRSEVLEEFATYLELEGKSKNTIRMYTYFLSKFLEEGYSPTARDALRFLAKLRAKGYSIRSINLVVQALKAYFKFEGLNEEAERLRNPKIPKTLPKSLTEEEVKKLIEVIPKDKIRDRLIVLLLYGTGLRVSELCNLKIEDINFEKGFLTVRGGKGGKDRTIPIPQPLLTEIKNYLRRRTDDSPYLFVESRRKNKEKLSPKTVWRILKEYGRKAGIKVTPHQLRHSFATHMLERGIDIRIIQELLGHASLSTTQIYTRVTAKHLKEAVERANLLENLIGGE</sequence>
<protein>
    <recommendedName>
        <fullName evidence="1">Tyrosine recombinase XerA</fullName>
    </recommendedName>
</protein>
<gene>
    <name evidence="1" type="primary">xerA</name>
    <name type="ordered locus">PF1868</name>
</gene>
<keyword id="KW-0963">Cytoplasm</keyword>
<keyword id="KW-0229">DNA integration</keyword>
<keyword id="KW-0233">DNA recombination</keyword>
<keyword id="KW-0238">DNA-binding</keyword>
<keyword id="KW-1185">Reference proteome</keyword>
<reference key="1">
    <citation type="journal article" date="1999" name="Genetics">
        <title>Divergence of the hyperthermophilic archaea Pyrococcus furiosus and P. horikoshii inferred from complete genomic sequences.</title>
        <authorList>
            <person name="Maeder D.L."/>
            <person name="Weiss R.B."/>
            <person name="Dunn D.M."/>
            <person name="Cherry J.L."/>
            <person name="Gonzalez J.M."/>
            <person name="DiRuggiero J."/>
            <person name="Robb F.T."/>
        </authorList>
    </citation>
    <scope>NUCLEOTIDE SEQUENCE [LARGE SCALE GENOMIC DNA]</scope>
    <source>
        <strain>ATCC 43587 / DSM 3638 / JCM 8422 / Vc1</strain>
    </source>
</reference>
<feature type="chain" id="PRO_0000095356" description="Tyrosine recombinase XerA">
    <location>
        <begin position="1"/>
        <end position="286"/>
    </location>
</feature>
<feature type="domain" description="Core-binding (CB)" evidence="3">
    <location>
        <begin position="5"/>
        <end position="82"/>
    </location>
</feature>
<feature type="domain" description="Tyr recombinase" evidence="2">
    <location>
        <begin position="98"/>
        <end position="274"/>
    </location>
</feature>
<feature type="active site" evidence="1">
    <location>
        <position position="135"/>
    </location>
</feature>
<feature type="active site" evidence="1">
    <location>
        <position position="160"/>
    </location>
</feature>
<feature type="active site" evidence="1">
    <location>
        <position position="226"/>
    </location>
</feature>
<feature type="active site" evidence="1">
    <location>
        <position position="229"/>
    </location>
</feature>
<feature type="active site" evidence="1">
    <location>
        <position position="252"/>
    </location>
</feature>
<feature type="active site" description="O-(3'-phospho-DNA)-tyrosine intermediate" evidence="1">
    <location>
        <position position="261"/>
    </location>
</feature>
<evidence type="ECO:0000255" key="1">
    <source>
        <dbReference type="HAMAP-Rule" id="MF_02055"/>
    </source>
</evidence>
<evidence type="ECO:0000255" key="2">
    <source>
        <dbReference type="PROSITE-ProRule" id="PRU01246"/>
    </source>
</evidence>
<evidence type="ECO:0000255" key="3">
    <source>
        <dbReference type="PROSITE-ProRule" id="PRU01248"/>
    </source>
</evidence>
<organism>
    <name type="scientific">Pyrococcus furiosus (strain ATCC 43587 / DSM 3638 / JCM 8422 / Vc1)</name>
    <dbReference type="NCBI Taxonomy" id="186497"/>
    <lineage>
        <taxon>Archaea</taxon>
        <taxon>Methanobacteriati</taxon>
        <taxon>Methanobacteriota</taxon>
        <taxon>Thermococci</taxon>
        <taxon>Thermococcales</taxon>
        <taxon>Thermococcaceae</taxon>
        <taxon>Pyrococcus</taxon>
    </lineage>
</organism>